<accession>P0A2X3</accession>
<accession>P21998</accession>
<evidence type="ECO:0000250" key="1"/>
<evidence type="ECO:0000255" key="2">
    <source>
        <dbReference type="PROSITE-ProRule" id="PRU00764"/>
    </source>
</evidence>
<evidence type="ECO:0000305" key="3"/>
<dbReference type="EC" id="3.1.11.2"/>
<dbReference type="EMBL" id="AE005672">
    <property type="protein sequence ID" value="AAK75918.1"/>
    <property type="molecule type" value="Genomic_DNA"/>
</dbReference>
<dbReference type="PIR" id="E95215">
    <property type="entry name" value="E95215"/>
</dbReference>
<dbReference type="RefSeq" id="WP_000767464.1">
    <property type="nucleotide sequence ID" value="NZ_CP155539.1"/>
</dbReference>
<dbReference type="SMR" id="P0A2X3"/>
<dbReference type="PaxDb" id="170187-SP_1845"/>
<dbReference type="EnsemblBacteria" id="AAK75918">
    <property type="protein sequence ID" value="AAK75918"/>
    <property type="gene ID" value="SP_1845"/>
</dbReference>
<dbReference type="KEGG" id="spn:SP_1845"/>
<dbReference type="eggNOG" id="COG0708">
    <property type="taxonomic scope" value="Bacteria"/>
</dbReference>
<dbReference type="PhylomeDB" id="P0A2X3"/>
<dbReference type="BioCyc" id="SPNE170187:G1FZB-1874-MONOMER"/>
<dbReference type="Proteomes" id="UP000000585">
    <property type="component" value="Chromosome"/>
</dbReference>
<dbReference type="GO" id="GO:0005737">
    <property type="term" value="C:cytoplasm"/>
    <property type="evidence" value="ECO:0007669"/>
    <property type="project" value="UniProtKB-SubCell"/>
</dbReference>
<dbReference type="GO" id="GO:0003677">
    <property type="term" value="F:DNA binding"/>
    <property type="evidence" value="ECO:0007669"/>
    <property type="project" value="InterPro"/>
</dbReference>
<dbReference type="GO" id="GO:0003906">
    <property type="term" value="F:DNA-(apurinic or apyrimidinic site) endonuclease activity"/>
    <property type="evidence" value="ECO:0007669"/>
    <property type="project" value="TreeGrafter"/>
</dbReference>
<dbReference type="GO" id="GO:0008311">
    <property type="term" value="F:double-stranded DNA 3'-5' DNA exonuclease activity"/>
    <property type="evidence" value="ECO:0007669"/>
    <property type="project" value="UniProtKB-EC"/>
</dbReference>
<dbReference type="GO" id="GO:0004519">
    <property type="term" value="F:endonuclease activity"/>
    <property type="evidence" value="ECO:0007669"/>
    <property type="project" value="InterPro"/>
</dbReference>
<dbReference type="GO" id="GO:0046872">
    <property type="term" value="F:metal ion binding"/>
    <property type="evidence" value="ECO:0007669"/>
    <property type="project" value="UniProtKB-KW"/>
</dbReference>
<dbReference type="GO" id="GO:0008081">
    <property type="term" value="F:phosphoric diester hydrolase activity"/>
    <property type="evidence" value="ECO:0007669"/>
    <property type="project" value="TreeGrafter"/>
</dbReference>
<dbReference type="GO" id="GO:0006284">
    <property type="term" value="P:base-excision repair"/>
    <property type="evidence" value="ECO:0007669"/>
    <property type="project" value="TreeGrafter"/>
</dbReference>
<dbReference type="CDD" id="cd09087">
    <property type="entry name" value="Ape1-like_AP-endo"/>
    <property type="match status" value="1"/>
</dbReference>
<dbReference type="FunFam" id="3.60.10.10:FF:000054">
    <property type="entry name" value="Exodeoxyribonuclease III"/>
    <property type="match status" value="1"/>
</dbReference>
<dbReference type="Gene3D" id="3.60.10.10">
    <property type="entry name" value="Endonuclease/exonuclease/phosphatase"/>
    <property type="match status" value="1"/>
</dbReference>
<dbReference type="InterPro" id="IPR004808">
    <property type="entry name" value="AP_endonuc_1"/>
</dbReference>
<dbReference type="InterPro" id="IPR020847">
    <property type="entry name" value="AP_endonuclease_F1_BS"/>
</dbReference>
<dbReference type="InterPro" id="IPR020848">
    <property type="entry name" value="AP_endonuclease_F1_CS"/>
</dbReference>
<dbReference type="InterPro" id="IPR036691">
    <property type="entry name" value="Endo/exonu/phosph_ase_sf"/>
</dbReference>
<dbReference type="InterPro" id="IPR005135">
    <property type="entry name" value="Endo/exonuclease/phosphatase"/>
</dbReference>
<dbReference type="NCBIfam" id="TIGR00195">
    <property type="entry name" value="exoDNase_III"/>
    <property type="match status" value="1"/>
</dbReference>
<dbReference type="NCBIfam" id="TIGR00633">
    <property type="entry name" value="xth"/>
    <property type="match status" value="1"/>
</dbReference>
<dbReference type="PANTHER" id="PTHR22748">
    <property type="entry name" value="AP ENDONUCLEASE"/>
    <property type="match status" value="1"/>
</dbReference>
<dbReference type="PANTHER" id="PTHR22748:SF6">
    <property type="entry name" value="DNA-(APURINIC OR APYRIMIDINIC SITE) ENDONUCLEASE"/>
    <property type="match status" value="1"/>
</dbReference>
<dbReference type="Pfam" id="PF03372">
    <property type="entry name" value="Exo_endo_phos"/>
    <property type="match status" value="1"/>
</dbReference>
<dbReference type="SUPFAM" id="SSF56219">
    <property type="entry name" value="DNase I-like"/>
    <property type="match status" value="1"/>
</dbReference>
<dbReference type="PROSITE" id="PS00726">
    <property type="entry name" value="AP_NUCLEASE_F1_1"/>
    <property type="match status" value="1"/>
</dbReference>
<dbReference type="PROSITE" id="PS00727">
    <property type="entry name" value="AP_NUCLEASE_F1_2"/>
    <property type="match status" value="1"/>
</dbReference>
<dbReference type="PROSITE" id="PS00728">
    <property type="entry name" value="AP_NUCLEASE_F1_3"/>
    <property type="match status" value="1"/>
</dbReference>
<dbReference type="PROSITE" id="PS51435">
    <property type="entry name" value="AP_NUCLEASE_F1_4"/>
    <property type="match status" value="1"/>
</dbReference>
<feature type="chain" id="PRO_0000200026" description="Exodeoxyribonuclease">
    <location>
        <begin position="1"/>
        <end position="275"/>
    </location>
</feature>
<feature type="active site" evidence="1">
    <location>
        <position position="128"/>
    </location>
</feature>
<feature type="active site" description="Proton donor/acceptor" evidence="1">
    <location>
        <position position="167"/>
    </location>
</feature>
<feature type="binding site" evidence="1">
    <location>
        <position position="9"/>
    </location>
    <ligand>
        <name>Mg(2+)</name>
        <dbReference type="ChEBI" id="CHEBI:18420"/>
        <label>1</label>
    </ligand>
</feature>
<feature type="binding site" evidence="1">
    <location>
        <position position="44"/>
    </location>
    <ligand>
        <name>Mg(2+)</name>
        <dbReference type="ChEBI" id="CHEBI:18420"/>
        <label>1</label>
    </ligand>
</feature>
<feature type="binding site" evidence="1">
    <location>
        <position position="167"/>
    </location>
    <ligand>
        <name>Mg(2+)</name>
        <dbReference type="ChEBI" id="CHEBI:18420"/>
        <label>2</label>
    </ligand>
</feature>
<feature type="binding site" evidence="1">
    <location>
        <position position="169"/>
    </location>
    <ligand>
        <name>Mg(2+)</name>
        <dbReference type="ChEBI" id="CHEBI:18420"/>
        <label>2</label>
    </ligand>
</feature>
<feature type="binding site" evidence="1">
    <location>
        <position position="265"/>
    </location>
    <ligand>
        <name>Mg(2+)</name>
        <dbReference type="ChEBI" id="CHEBI:18420"/>
        <label>1</label>
    </ligand>
</feature>
<feature type="site" description="Transition state stabilizer" evidence="1">
    <location>
        <position position="169"/>
    </location>
</feature>
<feature type="site" description="Important for catalytic activity" evidence="1">
    <location>
        <position position="240"/>
    </location>
</feature>
<feature type="site" description="Interaction with DNA substrate" evidence="1">
    <location>
        <position position="266"/>
    </location>
</feature>
<sequence length="275" mass="31064">MKLISWNIDSLNAALTSDSARAKLSQEVLQTLVAENADIIAIQETKLSAKGPTKKHVEILEELFPGYENTWRSSQEPARKGYAGTMFLYKKELTPTISFPEIGAPSTMDLEGRIITLEFDAFFVTQVYTPNAGDGLKRLEERQVWDAKYAEYLAELDKEKPVLATGDYNVAHNEIDLANPASNRRSPGFTDEERAGFTNLLATGFTDTFRHVHGDVPERYTWWAQRSKTSKINNTGWRIDYWLTSNRIADKVTKSDMIDSGARQDHTPIVLEIDL</sequence>
<organism>
    <name type="scientific">Streptococcus pneumoniae serotype 4 (strain ATCC BAA-334 / TIGR4)</name>
    <dbReference type="NCBI Taxonomy" id="170187"/>
    <lineage>
        <taxon>Bacteria</taxon>
        <taxon>Bacillati</taxon>
        <taxon>Bacillota</taxon>
        <taxon>Bacilli</taxon>
        <taxon>Lactobacillales</taxon>
        <taxon>Streptococcaceae</taxon>
        <taxon>Streptococcus</taxon>
    </lineage>
</organism>
<protein>
    <recommendedName>
        <fullName>Exodeoxyribonuclease</fullName>
        <ecNumber>3.1.11.2</ecNumber>
    </recommendedName>
</protein>
<comment type="function">
    <text evidence="1">In addition to 3'- to 5'-exonuclease and 3'-phosphatase activities, ExoA was shown to make single-strand breaks at apurinic sites in DNA.</text>
</comment>
<comment type="catalytic activity">
    <reaction>
        <text>Exonucleolytic cleavage in the 3'- to 5'-direction to yield nucleoside 5'-phosphates.</text>
        <dbReference type="EC" id="3.1.11.2"/>
    </reaction>
</comment>
<comment type="cofactor">
    <cofactor evidence="1">
        <name>Mg(2+)</name>
        <dbReference type="ChEBI" id="CHEBI:18420"/>
    </cofactor>
    <cofactor evidence="1">
        <name>Mn(2+)</name>
        <dbReference type="ChEBI" id="CHEBI:29035"/>
    </cofactor>
    <text evidence="1">Probably binds two magnesium or manganese ions per subunit.</text>
</comment>
<comment type="subcellular location">
    <subcellularLocation>
        <location evidence="2">Cytoplasm</location>
    </subcellularLocation>
</comment>
<comment type="similarity">
    <text evidence="3">Belongs to the DNA repair enzymes AP/ExoA family.</text>
</comment>
<proteinExistence type="inferred from homology"/>
<gene>
    <name type="primary">exoA</name>
    <name type="ordered locus">SP_1845</name>
</gene>
<name>EXOA_STRPN</name>
<keyword id="KW-0963">Cytoplasm</keyword>
<keyword id="KW-0269">Exonuclease</keyword>
<keyword id="KW-0378">Hydrolase</keyword>
<keyword id="KW-0460">Magnesium</keyword>
<keyword id="KW-0479">Metal-binding</keyword>
<keyword id="KW-0540">Nuclease</keyword>
<keyword id="KW-1185">Reference proteome</keyword>
<reference key="1">
    <citation type="journal article" date="2001" name="Science">
        <title>Complete genome sequence of a virulent isolate of Streptococcus pneumoniae.</title>
        <authorList>
            <person name="Tettelin H."/>
            <person name="Nelson K.E."/>
            <person name="Paulsen I.T."/>
            <person name="Eisen J.A."/>
            <person name="Read T.D."/>
            <person name="Peterson S.N."/>
            <person name="Heidelberg J.F."/>
            <person name="DeBoy R.T."/>
            <person name="Haft D.H."/>
            <person name="Dodson R.J."/>
            <person name="Durkin A.S."/>
            <person name="Gwinn M.L."/>
            <person name="Kolonay J.F."/>
            <person name="Nelson W.C."/>
            <person name="Peterson J.D."/>
            <person name="Umayam L.A."/>
            <person name="White O."/>
            <person name="Salzberg S.L."/>
            <person name="Lewis M.R."/>
            <person name="Radune D."/>
            <person name="Holtzapple E.K."/>
            <person name="Khouri H.M."/>
            <person name="Wolf A.M."/>
            <person name="Utterback T.R."/>
            <person name="Hansen C.L."/>
            <person name="McDonald L.A."/>
            <person name="Feldblyum T.V."/>
            <person name="Angiuoli S.V."/>
            <person name="Dickinson T."/>
            <person name="Hickey E.K."/>
            <person name="Holt I.E."/>
            <person name="Loftus B.J."/>
            <person name="Yang F."/>
            <person name="Smith H.O."/>
            <person name="Venter J.C."/>
            <person name="Dougherty B.A."/>
            <person name="Morrison D.A."/>
            <person name="Hollingshead S.K."/>
            <person name="Fraser C.M."/>
        </authorList>
    </citation>
    <scope>NUCLEOTIDE SEQUENCE [LARGE SCALE GENOMIC DNA]</scope>
    <source>
        <strain>ATCC BAA-334 / TIGR4</strain>
    </source>
</reference>